<dbReference type="EMBL" id="CP000439">
    <property type="protein sequence ID" value="ABK89163.1"/>
    <property type="molecule type" value="Genomic_DNA"/>
</dbReference>
<dbReference type="RefSeq" id="WP_003032887.1">
    <property type="nucleotide sequence ID" value="NZ_CP009633.1"/>
</dbReference>
<dbReference type="SMR" id="A0Q4J8"/>
<dbReference type="KEGG" id="ftn:FTN_0254"/>
<dbReference type="KEGG" id="ftx:AW25_1788"/>
<dbReference type="BioCyc" id="FTUL401614:G1G75-265-MONOMER"/>
<dbReference type="Proteomes" id="UP000000762">
    <property type="component" value="Chromosome"/>
</dbReference>
<dbReference type="GO" id="GO:0022625">
    <property type="term" value="C:cytosolic large ribosomal subunit"/>
    <property type="evidence" value="ECO:0007669"/>
    <property type="project" value="TreeGrafter"/>
</dbReference>
<dbReference type="GO" id="GO:0019843">
    <property type="term" value="F:rRNA binding"/>
    <property type="evidence" value="ECO:0007669"/>
    <property type="project" value="UniProtKB-UniRule"/>
</dbReference>
<dbReference type="GO" id="GO:0003735">
    <property type="term" value="F:structural constituent of ribosome"/>
    <property type="evidence" value="ECO:0007669"/>
    <property type="project" value="InterPro"/>
</dbReference>
<dbReference type="GO" id="GO:0002181">
    <property type="term" value="P:cytoplasmic translation"/>
    <property type="evidence" value="ECO:0007669"/>
    <property type="project" value="TreeGrafter"/>
</dbReference>
<dbReference type="FunFam" id="3.90.930.12:FF:000001">
    <property type="entry name" value="50S ribosomal protein L6"/>
    <property type="match status" value="1"/>
</dbReference>
<dbReference type="Gene3D" id="3.90.930.12">
    <property type="entry name" value="Ribosomal protein L6, alpha-beta domain"/>
    <property type="match status" value="2"/>
</dbReference>
<dbReference type="HAMAP" id="MF_01365_B">
    <property type="entry name" value="Ribosomal_uL6_B"/>
    <property type="match status" value="1"/>
</dbReference>
<dbReference type="InterPro" id="IPR000702">
    <property type="entry name" value="Ribosomal_uL6-like"/>
</dbReference>
<dbReference type="InterPro" id="IPR036789">
    <property type="entry name" value="Ribosomal_uL6-like_a/b-dom_sf"/>
</dbReference>
<dbReference type="InterPro" id="IPR020040">
    <property type="entry name" value="Ribosomal_uL6_a/b-dom"/>
</dbReference>
<dbReference type="InterPro" id="IPR019906">
    <property type="entry name" value="Ribosomal_uL6_bac-type"/>
</dbReference>
<dbReference type="InterPro" id="IPR002358">
    <property type="entry name" value="Ribosomal_uL6_CS"/>
</dbReference>
<dbReference type="NCBIfam" id="TIGR03654">
    <property type="entry name" value="L6_bact"/>
    <property type="match status" value="1"/>
</dbReference>
<dbReference type="PANTHER" id="PTHR11655">
    <property type="entry name" value="60S/50S RIBOSOMAL PROTEIN L6/L9"/>
    <property type="match status" value="1"/>
</dbReference>
<dbReference type="PANTHER" id="PTHR11655:SF14">
    <property type="entry name" value="LARGE RIBOSOMAL SUBUNIT PROTEIN UL6M"/>
    <property type="match status" value="1"/>
</dbReference>
<dbReference type="Pfam" id="PF00347">
    <property type="entry name" value="Ribosomal_L6"/>
    <property type="match status" value="2"/>
</dbReference>
<dbReference type="PIRSF" id="PIRSF002162">
    <property type="entry name" value="Ribosomal_L6"/>
    <property type="match status" value="1"/>
</dbReference>
<dbReference type="PRINTS" id="PR00059">
    <property type="entry name" value="RIBOSOMALL6"/>
</dbReference>
<dbReference type="SUPFAM" id="SSF56053">
    <property type="entry name" value="Ribosomal protein L6"/>
    <property type="match status" value="2"/>
</dbReference>
<dbReference type="PROSITE" id="PS00525">
    <property type="entry name" value="RIBOSOMAL_L6_1"/>
    <property type="match status" value="1"/>
</dbReference>
<accession>A0Q4J8</accession>
<reference key="1">
    <citation type="journal article" date="2007" name="Genome Biol.">
        <title>Comparison of Francisella tularensis genomes reveals evolutionary events associated with the emergence of human pathogenic strains.</title>
        <authorList>
            <person name="Rohmer L."/>
            <person name="Fong C."/>
            <person name="Abmayr S."/>
            <person name="Wasnick M."/>
            <person name="Larson Freeman T.J."/>
            <person name="Radey M."/>
            <person name="Guina T."/>
            <person name="Svensson K."/>
            <person name="Hayden H.S."/>
            <person name="Jacobs M."/>
            <person name="Gallagher L.A."/>
            <person name="Manoil C."/>
            <person name="Ernst R.K."/>
            <person name="Drees B."/>
            <person name="Buckley D."/>
            <person name="Haugen E."/>
            <person name="Bovee D."/>
            <person name="Zhou Y."/>
            <person name="Chang J."/>
            <person name="Levy R."/>
            <person name="Lim R."/>
            <person name="Gillett W."/>
            <person name="Guenthener D."/>
            <person name="Kang A."/>
            <person name="Shaffer S.A."/>
            <person name="Taylor G."/>
            <person name="Chen J."/>
            <person name="Gallis B."/>
            <person name="D'Argenio D.A."/>
            <person name="Forsman M."/>
            <person name="Olson M.V."/>
            <person name="Goodlett D.R."/>
            <person name="Kaul R."/>
            <person name="Miller S.I."/>
            <person name="Brittnacher M.J."/>
        </authorList>
    </citation>
    <scope>NUCLEOTIDE SEQUENCE [LARGE SCALE GENOMIC DNA]</scope>
    <source>
        <strain>U112</strain>
    </source>
</reference>
<feature type="chain" id="PRO_1000055233" description="Large ribosomal subunit protein uL6">
    <location>
        <begin position="1"/>
        <end position="178"/>
    </location>
</feature>
<keyword id="KW-0687">Ribonucleoprotein</keyword>
<keyword id="KW-0689">Ribosomal protein</keyword>
<keyword id="KW-0694">RNA-binding</keyword>
<keyword id="KW-0699">rRNA-binding</keyword>
<sequence>MSRIGKKPVVIPSGVTISVAAGNKVEVKGAKATLSKTFSTDVTFSVADNVATITPNNNSKNAIAQSGTARAILSNMVEGVSKGFERKLKIIGVGYRAKAQGNELNLTLGFSHPVVYKLPQGITAETPAPTEIILKGADKELLGKVASEIREYRKPEPYKGKGVRYEDEYVAKKEAKKK</sequence>
<comment type="function">
    <text evidence="1">This protein binds to the 23S rRNA, and is important in its secondary structure. It is located near the subunit interface in the base of the L7/L12 stalk, and near the tRNA binding site of the peptidyltransferase center.</text>
</comment>
<comment type="subunit">
    <text evidence="1">Part of the 50S ribosomal subunit.</text>
</comment>
<comment type="similarity">
    <text evidence="1">Belongs to the universal ribosomal protein uL6 family.</text>
</comment>
<protein>
    <recommendedName>
        <fullName evidence="1">Large ribosomal subunit protein uL6</fullName>
    </recommendedName>
    <alternativeName>
        <fullName evidence="2">50S ribosomal protein L6</fullName>
    </alternativeName>
</protein>
<evidence type="ECO:0000255" key="1">
    <source>
        <dbReference type="HAMAP-Rule" id="MF_01365"/>
    </source>
</evidence>
<evidence type="ECO:0000305" key="2"/>
<organism>
    <name type="scientific">Francisella tularensis subsp. novicida (strain U112)</name>
    <dbReference type="NCBI Taxonomy" id="401614"/>
    <lineage>
        <taxon>Bacteria</taxon>
        <taxon>Pseudomonadati</taxon>
        <taxon>Pseudomonadota</taxon>
        <taxon>Gammaproteobacteria</taxon>
        <taxon>Thiotrichales</taxon>
        <taxon>Francisellaceae</taxon>
        <taxon>Francisella</taxon>
    </lineage>
</organism>
<name>RL6_FRATN</name>
<gene>
    <name evidence="1" type="primary">rplF</name>
    <name type="ordered locus">FTN_0254</name>
</gene>
<proteinExistence type="inferred from homology"/>